<sequence length="465" mass="46685">MFTKTQILALALSIASAEAVSKGFNYGANKPDGTLKVQADFEAEFRTAKNLETTSGFNSARLYTMIQGTGSTPISAIPAAIAEETTLLLGLWASGGNMDNEIAALKAAINQYGDEFAKLVVGISVGSEDLYRNSEIGVQANAGIGIEPEELVSYIQRVREAIAGTALSGAPIGHVDTWNAWTNGSNAAVAEAVDWLGFDGYPFFQNTMQNSIDDAKALFDESVQKTKAVAGNKEVWITETGWPVSGDSQNLAIASVENAKQFWDEVGCPLFDNVNTWWYILQDASGSSVPNPSFGIVGNTLSTTPLFDLSCSASSKKNSSSASASASGSSAQSTGFVSTTKPAASPSGSSGLGHGGSLGSSGSFSGGHYAGVGSSSVIASPSATPSGSAVPGSSSGPGSSSGSASGSSSGFGSGAAADSTSGTSTSGDSTSSTSATPADFTGAGSRLSGSIFGAAMLVAALAVAL</sequence>
<comment type="function">
    <text evidence="5">Glucanases play a role in cell expansion during growth, in cell-cell fusion during mating, and in spore release during sporulation. This enzyme may be involved in beta-glucan degradation and also function biosynthetically as a transglycosylase.</text>
</comment>
<comment type="catalytic activity">
    <reaction>
        <text>Hydrolysis of (1-&gt;3)-beta-D-glucosidic linkages in (1-&gt;3)-beta-D-glucans.</text>
        <dbReference type="EC" id="3.2.1.39"/>
    </reaction>
</comment>
<comment type="subcellular location">
    <subcellularLocation>
        <location evidence="6">Cell membrane</location>
        <topology evidence="6">Lipid-anchor</topology>
        <topology evidence="6">GPI-anchor</topology>
    </subcellularLocation>
    <subcellularLocation>
        <location evidence="6">Secreted</location>
        <location evidence="6">Cell wall</location>
    </subcellularLocation>
    <subcellularLocation>
        <location evidence="7">Secreted</location>
    </subcellularLocation>
    <text>Covalently-linked GPI-modified cell wall protein.</text>
</comment>
<comment type="induction">
    <text evidence="5">Expression is under the control of the nsdD transcription factor required for sexual development. Transcript level is the highest at the beginning of asexual development and decreases thereafter to increase again at the late stage.</text>
</comment>
<comment type="PTM">
    <text evidence="1">The GPI-anchor is attached to the protein in the endoplasmic reticulum and serves to target the protein to the cell surface. There, the glucosamine-inositol phospholipid moiety is cleaved off and the GPI-modified mannoprotein is covalently attached via its lipidless GPI glycan remnant to the 1,6-beta-glucan of the outer cell wall layer (By similarity).</text>
</comment>
<comment type="similarity">
    <text evidence="8">Belongs to the glycosyl hydrolase 17 family.</text>
</comment>
<feature type="signal peptide" evidence="3">
    <location>
        <begin position="1"/>
        <end position="19"/>
    </location>
</feature>
<feature type="chain" id="PRO_0000395149" description="Probable glucan endo-1,3-beta-glucosidase eglC">
    <location>
        <begin position="20"/>
        <end position="442"/>
    </location>
</feature>
<feature type="propeptide" id="PRO_0000395150" description="Removed in mature form" evidence="3">
    <location>
        <begin position="443"/>
        <end position="465"/>
    </location>
</feature>
<feature type="region of interest" description="Disordered" evidence="4">
    <location>
        <begin position="320"/>
        <end position="356"/>
    </location>
</feature>
<feature type="region of interest" description="Disordered" evidence="4">
    <location>
        <begin position="380"/>
        <end position="440"/>
    </location>
</feature>
<feature type="compositionally biased region" description="Low complexity" evidence="4">
    <location>
        <begin position="320"/>
        <end position="333"/>
    </location>
</feature>
<feature type="compositionally biased region" description="Low complexity" evidence="4">
    <location>
        <begin position="380"/>
        <end position="438"/>
    </location>
</feature>
<feature type="active site" description="Proton donor" evidence="2">
    <location>
        <position position="128"/>
    </location>
</feature>
<feature type="active site" description="Nucleophile" evidence="2">
    <location>
        <position position="239"/>
    </location>
</feature>
<feature type="lipid moiety-binding region" description="GPI-anchor amidated glycine" evidence="3">
    <location>
        <position position="442"/>
    </location>
</feature>
<feature type="glycosylation site" description="N-linked (GlcNAc...) asparagine" evidence="3">
    <location>
        <position position="183"/>
    </location>
</feature>
<feature type="glycosylation site" description="N-linked (GlcNAc...) asparagine" evidence="3">
    <location>
        <position position="318"/>
    </location>
</feature>
<organism>
    <name type="scientific">Emericella nidulans (strain FGSC A4 / ATCC 38163 / CBS 112.46 / NRRL 194 / M139)</name>
    <name type="common">Aspergillus nidulans</name>
    <dbReference type="NCBI Taxonomy" id="227321"/>
    <lineage>
        <taxon>Eukaryota</taxon>
        <taxon>Fungi</taxon>
        <taxon>Dikarya</taxon>
        <taxon>Ascomycota</taxon>
        <taxon>Pezizomycotina</taxon>
        <taxon>Eurotiomycetes</taxon>
        <taxon>Eurotiomycetidae</taxon>
        <taxon>Eurotiales</taxon>
        <taxon>Aspergillaceae</taxon>
        <taxon>Aspergillus</taxon>
        <taxon>Aspergillus subgen. Nidulantes</taxon>
    </lineage>
</organism>
<name>EGLC_EMENI</name>
<reference key="1">
    <citation type="journal article" date="2005" name="Fungal Genet. Biol.">
        <title>Isolation and characterization of the Aspergillus nidulans eglC gene encoding a putative beta-1,3-endoglucanase.</title>
        <authorList>
            <person name="Choi C.J."/>
            <person name="Ju H.J."/>
            <person name="Park B.H."/>
            <person name="Qin R."/>
            <person name="Jahng K.Y."/>
            <person name="Han D.M."/>
            <person name="Chae K.S."/>
        </authorList>
    </citation>
    <scope>NUCLEOTIDE SEQUENCE [GENOMIC DNA]</scope>
    <scope>FUNCTION</scope>
    <scope>INDUCTION</scope>
</reference>
<reference key="2">
    <citation type="journal article" date="2005" name="Nature">
        <title>Sequencing of Aspergillus nidulans and comparative analysis with A. fumigatus and A. oryzae.</title>
        <authorList>
            <person name="Galagan J.E."/>
            <person name="Calvo S.E."/>
            <person name="Cuomo C."/>
            <person name="Ma L.-J."/>
            <person name="Wortman J.R."/>
            <person name="Batzoglou S."/>
            <person name="Lee S.-I."/>
            <person name="Bastuerkmen M."/>
            <person name="Spevak C.C."/>
            <person name="Clutterbuck J."/>
            <person name="Kapitonov V."/>
            <person name="Jurka J."/>
            <person name="Scazzocchio C."/>
            <person name="Farman M.L."/>
            <person name="Butler J."/>
            <person name="Purcell S."/>
            <person name="Harris S."/>
            <person name="Braus G.H."/>
            <person name="Draht O."/>
            <person name="Busch S."/>
            <person name="D'Enfert C."/>
            <person name="Bouchier C."/>
            <person name="Goldman G.H."/>
            <person name="Bell-Pedersen D."/>
            <person name="Griffiths-Jones S."/>
            <person name="Doonan J.H."/>
            <person name="Yu J."/>
            <person name="Vienken K."/>
            <person name="Pain A."/>
            <person name="Freitag M."/>
            <person name="Selker E.U."/>
            <person name="Archer D.B."/>
            <person name="Penalva M.A."/>
            <person name="Oakley B.R."/>
            <person name="Momany M."/>
            <person name="Tanaka T."/>
            <person name="Kumagai T."/>
            <person name="Asai K."/>
            <person name="Machida M."/>
            <person name="Nierman W.C."/>
            <person name="Denning D.W."/>
            <person name="Caddick M.X."/>
            <person name="Hynes M."/>
            <person name="Paoletti M."/>
            <person name="Fischer R."/>
            <person name="Miller B.L."/>
            <person name="Dyer P.S."/>
            <person name="Sachs M.S."/>
            <person name="Osmani S.A."/>
            <person name="Birren B.W."/>
        </authorList>
    </citation>
    <scope>NUCLEOTIDE SEQUENCE [LARGE SCALE GENOMIC DNA]</scope>
    <source>
        <strain>FGSC A4 / ATCC 38163 / CBS 112.46 / NRRL 194 / M139</strain>
    </source>
</reference>
<reference key="3">
    <citation type="journal article" date="2009" name="Fungal Genet. Biol.">
        <title>The 2008 update of the Aspergillus nidulans genome annotation: a community effort.</title>
        <authorList>
            <person name="Wortman J.R."/>
            <person name="Gilsenan J.M."/>
            <person name="Joardar V."/>
            <person name="Deegan J."/>
            <person name="Clutterbuck J."/>
            <person name="Andersen M.R."/>
            <person name="Archer D."/>
            <person name="Bencina M."/>
            <person name="Braus G."/>
            <person name="Coutinho P."/>
            <person name="von Dohren H."/>
            <person name="Doonan J."/>
            <person name="Driessen A.J."/>
            <person name="Durek P."/>
            <person name="Espeso E."/>
            <person name="Fekete E."/>
            <person name="Flipphi M."/>
            <person name="Estrada C.G."/>
            <person name="Geysens S."/>
            <person name="Goldman G."/>
            <person name="de Groot P.W."/>
            <person name="Hansen K."/>
            <person name="Harris S.D."/>
            <person name="Heinekamp T."/>
            <person name="Helmstaedt K."/>
            <person name="Henrissat B."/>
            <person name="Hofmann G."/>
            <person name="Homan T."/>
            <person name="Horio T."/>
            <person name="Horiuchi H."/>
            <person name="James S."/>
            <person name="Jones M."/>
            <person name="Karaffa L."/>
            <person name="Karanyi Z."/>
            <person name="Kato M."/>
            <person name="Keller N."/>
            <person name="Kelly D.E."/>
            <person name="Kiel J.A."/>
            <person name="Kim J.M."/>
            <person name="van der Klei I.J."/>
            <person name="Klis F.M."/>
            <person name="Kovalchuk A."/>
            <person name="Krasevec N."/>
            <person name="Kubicek C.P."/>
            <person name="Liu B."/>
            <person name="Maccabe A."/>
            <person name="Meyer V."/>
            <person name="Mirabito P."/>
            <person name="Miskei M."/>
            <person name="Mos M."/>
            <person name="Mullins J."/>
            <person name="Nelson D.R."/>
            <person name="Nielsen J."/>
            <person name="Oakley B.R."/>
            <person name="Osmani S.A."/>
            <person name="Pakula T."/>
            <person name="Paszewski A."/>
            <person name="Paulsen I."/>
            <person name="Pilsyk S."/>
            <person name="Pocsi I."/>
            <person name="Punt P.J."/>
            <person name="Ram A.F."/>
            <person name="Ren Q."/>
            <person name="Robellet X."/>
            <person name="Robson G."/>
            <person name="Seiboth B."/>
            <person name="van Solingen P."/>
            <person name="Specht T."/>
            <person name="Sun J."/>
            <person name="Taheri-Talesh N."/>
            <person name="Takeshita N."/>
            <person name="Ussery D."/>
            <person name="vanKuyk P.A."/>
            <person name="Visser H."/>
            <person name="van de Vondervoort P.J."/>
            <person name="de Vries R.P."/>
            <person name="Walton J."/>
            <person name="Xiang X."/>
            <person name="Xiong Y."/>
            <person name="Zeng A.P."/>
            <person name="Brandt B.W."/>
            <person name="Cornell M.J."/>
            <person name="van den Hondel C.A."/>
            <person name="Visser J."/>
            <person name="Oliver S.G."/>
            <person name="Turner G."/>
        </authorList>
    </citation>
    <scope>GENOME REANNOTATION</scope>
    <source>
        <strain>FGSC A4 / ATCC 38163 / CBS 112.46 / NRRL 194 / M139</strain>
    </source>
</reference>
<reference key="4">
    <citation type="journal article" date="2009" name="Fungal Genet. Biol.">
        <title>Comprehensive genomic analysis of cell wall genes in Aspergillus nidulans.</title>
        <authorList>
            <person name="de Groot P.W."/>
            <person name="Brandt B.W."/>
            <person name="Horiuchi H."/>
            <person name="Ram A.F."/>
            <person name="de Koster C.G."/>
            <person name="Klis F.M."/>
        </authorList>
    </citation>
    <scope>IDENTIFICATION BY MASS SPECTROMETRY</scope>
    <scope>SUBCELLULAR LOCATION</scope>
</reference>
<reference key="5">
    <citation type="journal article" date="2014" name="BMC Genomics">
        <title>Elucidating how the saprophytic fungus Aspergillus nidulans uses the plant polyester suberin as carbon source.</title>
        <authorList>
            <person name="Martins I."/>
            <person name="Hartmann D.O."/>
            <person name="Alves P.C."/>
            <person name="Martins C."/>
            <person name="Garcia H."/>
            <person name="Leclercq C.C."/>
            <person name="Ferreira R."/>
            <person name="He J."/>
            <person name="Renaut J."/>
            <person name="Becker J.D."/>
            <person name="Silva Pereira C."/>
        </authorList>
    </citation>
    <scope>SUBCELLULAR LOCATION</scope>
</reference>
<gene>
    <name type="primary">eglC</name>
    <name type="ORF">AN7950</name>
</gene>
<dbReference type="EC" id="3.2.1.39"/>
<dbReference type="EMBL" id="AY684801">
    <property type="protein sequence ID" value="AAT90341.1"/>
    <property type="molecule type" value="Genomic_DNA"/>
</dbReference>
<dbReference type="EMBL" id="AACD01000135">
    <property type="protein sequence ID" value="EAA59604.1"/>
    <property type="molecule type" value="Genomic_DNA"/>
</dbReference>
<dbReference type="EMBL" id="BN001302">
    <property type="protein sequence ID" value="CBF73583.1"/>
    <property type="molecule type" value="Genomic_DNA"/>
</dbReference>
<dbReference type="RefSeq" id="XP_681219.1">
    <property type="nucleotide sequence ID" value="XM_676127.1"/>
</dbReference>
<dbReference type="SMR" id="Q5AUT0"/>
<dbReference type="STRING" id="227321.Q5AUT0"/>
<dbReference type="CAZy" id="GH17">
    <property type="family name" value="Glycoside Hydrolase Family 17"/>
</dbReference>
<dbReference type="GlyCosmos" id="Q5AUT0">
    <property type="glycosylation" value="2 sites, No reported glycans"/>
</dbReference>
<dbReference type="EnsemblFungi" id="CBF73583">
    <property type="protein sequence ID" value="CBF73583"/>
    <property type="gene ID" value="ANIA_07950"/>
</dbReference>
<dbReference type="KEGG" id="ani:ANIA_07950"/>
<dbReference type="VEuPathDB" id="FungiDB:AN7950"/>
<dbReference type="eggNOG" id="ENOG502SI3D">
    <property type="taxonomic scope" value="Eukaryota"/>
</dbReference>
<dbReference type="HOGENOM" id="CLU_028820_1_1_1"/>
<dbReference type="InParanoid" id="Q5AUT0"/>
<dbReference type="OMA" id="WDDVGCP"/>
<dbReference type="OrthoDB" id="77201at2759"/>
<dbReference type="Proteomes" id="UP000000560">
    <property type="component" value="Chromosome II"/>
</dbReference>
<dbReference type="GO" id="GO:0009986">
    <property type="term" value="C:cell surface"/>
    <property type="evidence" value="ECO:0000318"/>
    <property type="project" value="GO_Central"/>
</dbReference>
<dbReference type="GO" id="GO:0005576">
    <property type="term" value="C:extracellular region"/>
    <property type="evidence" value="ECO:0000318"/>
    <property type="project" value="GO_Central"/>
</dbReference>
<dbReference type="GO" id="GO:0009277">
    <property type="term" value="C:fungal-type cell wall"/>
    <property type="evidence" value="ECO:0000318"/>
    <property type="project" value="GO_Central"/>
</dbReference>
<dbReference type="GO" id="GO:0005886">
    <property type="term" value="C:plasma membrane"/>
    <property type="evidence" value="ECO:0007669"/>
    <property type="project" value="UniProtKB-SubCell"/>
</dbReference>
<dbReference type="GO" id="GO:0098552">
    <property type="term" value="C:side of membrane"/>
    <property type="evidence" value="ECO:0007669"/>
    <property type="project" value="UniProtKB-KW"/>
</dbReference>
<dbReference type="GO" id="GO:0042973">
    <property type="term" value="F:glucan endo-1,3-beta-D-glucosidase activity"/>
    <property type="evidence" value="ECO:0000318"/>
    <property type="project" value="GO_Central"/>
</dbReference>
<dbReference type="GO" id="GO:0071555">
    <property type="term" value="P:cell wall organization"/>
    <property type="evidence" value="ECO:0000318"/>
    <property type="project" value="GO_Central"/>
</dbReference>
<dbReference type="GO" id="GO:0000272">
    <property type="term" value="P:polysaccharide catabolic process"/>
    <property type="evidence" value="ECO:0007669"/>
    <property type="project" value="UniProtKB-KW"/>
</dbReference>
<dbReference type="FunFam" id="3.20.20.80:FF:000233">
    <property type="entry name" value="Probable glucan endo-1,3-beta-glucosidase eglC"/>
    <property type="match status" value="1"/>
</dbReference>
<dbReference type="Gene3D" id="3.20.20.80">
    <property type="entry name" value="Glycosidases"/>
    <property type="match status" value="1"/>
</dbReference>
<dbReference type="InterPro" id="IPR050732">
    <property type="entry name" value="Beta-glucan_modifiers"/>
</dbReference>
<dbReference type="InterPro" id="IPR000490">
    <property type="entry name" value="Glyco_hydro_17"/>
</dbReference>
<dbReference type="InterPro" id="IPR017853">
    <property type="entry name" value="Glycoside_hydrolase_SF"/>
</dbReference>
<dbReference type="PANTHER" id="PTHR16631">
    <property type="entry name" value="GLUCAN 1,3-BETA-GLUCOSIDASE"/>
    <property type="match status" value="1"/>
</dbReference>
<dbReference type="PANTHER" id="PTHR16631:SF13">
    <property type="entry name" value="GLUCAN ENDO-1,3-BETA-GLUCOSIDASE EGLC-RELATED"/>
    <property type="match status" value="1"/>
</dbReference>
<dbReference type="Pfam" id="PF00332">
    <property type="entry name" value="Glyco_hydro_17"/>
    <property type="match status" value="1"/>
</dbReference>
<dbReference type="SUPFAM" id="SSF51445">
    <property type="entry name" value="(Trans)glycosidases"/>
    <property type="match status" value="1"/>
</dbReference>
<proteinExistence type="evidence at protein level"/>
<keyword id="KW-0119">Carbohydrate metabolism</keyword>
<keyword id="KW-1003">Cell membrane</keyword>
<keyword id="KW-0134">Cell wall</keyword>
<keyword id="KW-0961">Cell wall biogenesis/degradation</keyword>
<keyword id="KW-0325">Glycoprotein</keyword>
<keyword id="KW-0336">GPI-anchor</keyword>
<keyword id="KW-0378">Hydrolase</keyword>
<keyword id="KW-0449">Lipoprotein</keyword>
<keyword id="KW-0472">Membrane</keyword>
<keyword id="KW-0624">Polysaccharide degradation</keyword>
<keyword id="KW-1185">Reference proteome</keyword>
<keyword id="KW-0964">Secreted</keyword>
<keyword id="KW-0732">Signal</keyword>
<accession>Q5AUT0</accession>
<accession>C8V585</accession>
<accession>Q4QXR7</accession>
<evidence type="ECO:0000250" key="1"/>
<evidence type="ECO:0000250" key="2">
    <source>
        <dbReference type="UniProtKB" id="O22317"/>
    </source>
</evidence>
<evidence type="ECO:0000255" key="3"/>
<evidence type="ECO:0000256" key="4">
    <source>
        <dbReference type="SAM" id="MobiDB-lite"/>
    </source>
</evidence>
<evidence type="ECO:0000269" key="5">
    <source>
    </source>
</evidence>
<evidence type="ECO:0000269" key="6">
    <source>
    </source>
</evidence>
<evidence type="ECO:0000269" key="7">
    <source>
    </source>
</evidence>
<evidence type="ECO:0000305" key="8"/>
<protein>
    <recommendedName>
        <fullName>Probable glucan endo-1,3-beta-glucosidase eglC</fullName>
        <ecNumber>3.2.1.39</ecNumber>
    </recommendedName>
    <alternativeName>
        <fullName>Endo-1,3-beta-glucanase eglC</fullName>
    </alternativeName>
    <alternativeName>
        <fullName>Laminarinase eglC</fullName>
    </alternativeName>
</protein>